<gene>
    <name type="ordered locus">YPDSF_0571</name>
</gene>
<organism>
    <name type="scientific">Yersinia pestis (strain Pestoides F)</name>
    <dbReference type="NCBI Taxonomy" id="386656"/>
    <lineage>
        <taxon>Bacteria</taxon>
        <taxon>Pseudomonadati</taxon>
        <taxon>Pseudomonadota</taxon>
        <taxon>Gammaproteobacteria</taxon>
        <taxon>Enterobacterales</taxon>
        <taxon>Yersiniaceae</taxon>
        <taxon>Yersinia</taxon>
    </lineage>
</organism>
<name>Y571_YERPP</name>
<feature type="chain" id="PRO_1000056799" description="UPF0235 protein YPDSF_0571">
    <location>
        <begin position="1"/>
        <end position="96"/>
    </location>
</feature>
<accession>A4TI69</accession>
<comment type="similarity">
    <text evidence="1">Belongs to the UPF0235 family.</text>
</comment>
<proteinExistence type="inferred from homology"/>
<dbReference type="EMBL" id="CP000668">
    <property type="protein sequence ID" value="ABP38981.1"/>
    <property type="molecule type" value="Genomic_DNA"/>
</dbReference>
<dbReference type="SMR" id="A4TI69"/>
<dbReference type="KEGG" id="ypp:YPDSF_0571"/>
<dbReference type="PATRIC" id="fig|386656.14.peg.1889"/>
<dbReference type="GO" id="GO:0005737">
    <property type="term" value="C:cytoplasm"/>
    <property type="evidence" value="ECO:0007669"/>
    <property type="project" value="TreeGrafter"/>
</dbReference>
<dbReference type="Gene3D" id="3.30.1200.10">
    <property type="entry name" value="YggU-like"/>
    <property type="match status" value="1"/>
</dbReference>
<dbReference type="HAMAP" id="MF_00634">
    <property type="entry name" value="UPF0235"/>
    <property type="match status" value="1"/>
</dbReference>
<dbReference type="InterPro" id="IPR003746">
    <property type="entry name" value="DUF167"/>
</dbReference>
<dbReference type="InterPro" id="IPR036591">
    <property type="entry name" value="YggU-like_sf"/>
</dbReference>
<dbReference type="NCBIfam" id="TIGR00251">
    <property type="entry name" value="DUF167 family protein"/>
    <property type="match status" value="1"/>
</dbReference>
<dbReference type="NCBIfam" id="NF003466">
    <property type="entry name" value="PRK05090.1"/>
    <property type="match status" value="1"/>
</dbReference>
<dbReference type="PANTHER" id="PTHR13420">
    <property type="entry name" value="UPF0235 PROTEIN C15ORF40"/>
    <property type="match status" value="1"/>
</dbReference>
<dbReference type="PANTHER" id="PTHR13420:SF7">
    <property type="entry name" value="UPF0235 PROTEIN C15ORF40"/>
    <property type="match status" value="1"/>
</dbReference>
<dbReference type="Pfam" id="PF02594">
    <property type="entry name" value="DUF167"/>
    <property type="match status" value="1"/>
</dbReference>
<dbReference type="SMART" id="SM01152">
    <property type="entry name" value="DUF167"/>
    <property type="match status" value="1"/>
</dbReference>
<dbReference type="SUPFAM" id="SSF69786">
    <property type="entry name" value="YggU-like"/>
    <property type="match status" value="1"/>
</dbReference>
<sequence>MSAVLSTENGLILKLYIQPKASRDQIVGLHGDELKVAITAPPVDGQANTHLVKFIAKQFRVAKSQVIIEKGELGRHKQIKVINPQQIPPEVTILLE</sequence>
<evidence type="ECO:0000255" key="1">
    <source>
        <dbReference type="HAMAP-Rule" id="MF_00634"/>
    </source>
</evidence>
<protein>
    <recommendedName>
        <fullName evidence="1">UPF0235 protein YPDSF_0571</fullName>
    </recommendedName>
</protein>
<reference key="1">
    <citation type="submission" date="2007-02" db="EMBL/GenBank/DDBJ databases">
        <title>Complete sequence of chromosome of Yersinia pestis Pestoides F.</title>
        <authorList>
            <consortium name="US DOE Joint Genome Institute"/>
            <person name="Copeland A."/>
            <person name="Lucas S."/>
            <person name="Lapidus A."/>
            <person name="Barry K."/>
            <person name="Detter J.C."/>
            <person name="Glavina del Rio T."/>
            <person name="Hammon N."/>
            <person name="Israni S."/>
            <person name="Dalin E."/>
            <person name="Tice H."/>
            <person name="Pitluck S."/>
            <person name="Di Bartolo G."/>
            <person name="Chain P."/>
            <person name="Malfatti S."/>
            <person name="Shin M."/>
            <person name="Vergez L."/>
            <person name="Schmutz J."/>
            <person name="Larimer F."/>
            <person name="Land M."/>
            <person name="Hauser L."/>
            <person name="Worsham P."/>
            <person name="Chu M."/>
            <person name="Bearden S."/>
            <person name="Garcia E."/>
            <person name="Richardson P."/>
        </authorList>
    </citation>
    <scope>NUCLEOTIDE SEQUENCE [LARGE SCALE GENOMIC DNA]</scope>
    <source>
        <strain>Pestoides F</strain>
    </source>
</reference>